<name>YIDD_BURA4</name>
<keyword id="KW-0997">Cell inner membrane</keyword>
<keyword id="KW-1003">Cell membrane</keyword>
<keyword id="KW-0472">Membrane</keyword>
<dbReference type="EMBL" id="CP001025">
    <property type="protein sequence ID" value="ACB65575.1"/>
    <property type="molecule type" value="Genomic_DNA"/>
</dbReference>
<dbReference type="KEGG" id="bac:BamMC406_3100"/>
<dbReference type="HOGENOM" id="CLU_144811_2_2_4"/>
<dbReference type="OrthoDB" id="9801753at2"/>
<dbReference type="Proteomes" id="UP000001680">
    <property type="component" value="Chromosome 1"/>
</dbReference>
<dbReference type="GO" id="GO:0005886">
    <property type="term" value="C:plasma membrane"/>
    <property type="evidence" value="ECO:0007669"/>
    <property type="project" value="UniProtKB-SubCell"/>
</dbReference>
<dbReference type="HAMAP" id="MF_00386">
    <property type="entry name" value="UPF0161_YidD"/>
    <property type="match status" value="1"/>
</dbReference>
<dbReference type="InterPro" id="IPR002696">
    <property type="entry name" value="Membr_insert_effic_factor_YidD"/>
</dbReference>
<dbReference type="NCBIfam" id="TIGR00278">
    <property type="entry name" value="membrane protein insertion efficiency factor YidD"/>
    <property type="match status" value="1"/>
</dbReference>
<dbReference type="PANTHER" id="PTHR33383">
    <property type="entry name" value="MEMBRANE PROTEIN INSERTION EFFICIENCY FACTOR-RELATED"/>
    <property type="match status" value="1"/>
</dbReference>
<dbReference type="PANTHER" id="PTHR33383:SF1">
    <property type="entry name" value="MEMBRANE PROTEIN INSERTION EFFICIENCY FACTOR-RELATED"/>
    <property type="match status" value="1"/>
</dbReference>
<dbReference type="Pfam" id="PF01809">
    <property type="entry name" value="YidD"/>
    <property type="match status" value="1"/>
</dbReference>
<dbReference type="SMART" id="SM01234">
    <property type="entry name" value="Haemolytic"/>
    <property type="match status" value="1"/>
</dbReference>
<organism>
    <name type="scientific">Burkholderia ambifaria (strain MC40-6)</name>
    <dbReference type="NCBI Taxonomy" id="398577"/>
    <lineage>
        <taxon>Bacteria</taxon>
        <taxon>Pseudomonadati</taxon>
        <taxon>Pseudomonadota</taxon>
        <taxon>Betaproteobacteria</taxon>
        <taxon>Burkholderiales</taxon>
        <taxon>Burkholderiaceae</taxon>
        <taxon>Burkholderia</taxon>
        <taxon>Burkholderia cepacia complex</taxon>
    </lineage>
</organism>
<gene>
    <name type="ordered locus">BamMC406_3100</name>
</gene>
<proteinExistence type="inferred from homology"/>
<sequence>METVLIALLRFYKVAVSPMLGNRCRFYPSCSDYAREAIQYHGAARGTYLAVRRVCRCHPFSAGGIDLVPPPNSDTRARGEADARSHRL</sequence>
<evidence type="ECO:0000255" key="1">
    <source>
        <dbReference type="HAMAP-Rule" id="MF_00386"/>
    </source>
</evidence>
<evidence type="ECO:0000256" key="2">
    <source>
        <dbReference type="SAM" id="MobiDB-lite"/>
    </source>
</evidence>
<reference key="1">
    <citation type="submission" date="2008-04" db="EMBL/GenBank/DDBJ databases">
        <title>Complete sequence of chromosome 1 of Burkholderia ambifaria MC40-6.</title>
        <authorList>
            <person name="Copeland A."/>
            <person name="Lucas S."/>
            <person name="Lapidus A."/>
            <person name="Glavina del Rio T."/>
            <person name="Dalin E."/>
            <person name="Tice H."/>
            <person name="Pitluck S."/>
            <person name="Chain P."/>
            <person name="Malfatti S."/>
            <person name="Shin M."/>
            <person name="Vergez L."/>
            <person name="Lang D."/>
            <person name="Schmutz J."/>
            <person name="Larimer F."/>
            <person name="Land M."/>
            <person name="Hauser L."/>
            <person name="Kyrpides N."/>
            <person name="Lykidis A."/>
            <person name="Ramette A."/>
            <person name="Konstantinidis K."/>
            <person name="Tiedje J."/>
            <person name="Richardson P."/>
        </authorList>
    </citation>
    <scope>NUCLEOTIDE SEQUENCE [LARGE SCALE GENOMIC DNA]</scope>
    <source>
        <strain>MC40-6</strain>
    </source>
</reference>
<feature type="chain" id="PRO_1000122620" description="Putative membrane protein insertion efficiency factor">
    <location>
        <begin position="1"/>
        <end position="88"/>
    </location>
</feature>
<feature type="region of interest" description="Disordered" evidence="2">
    <location>
        <begin position="68"/>
        <end position="88"/>
    </location>
</feature>
<feature type="compositionally biased region" description="Basic and acidic residues" evidence="2">
    <location>
        <begin position="75"/>
        <end position="88"/>
    </location>
</feature>
<comment type="function">
    <text evidence="1">Could be involved in insertion of integral membrane proteins into the membrane.</text>
</comment>
<comment type="subcellular location">
    <subcellularLocation>
        <location evidence="1">Cell inner membrane</location>
        <topology evidence="1">Peripheral membrane protein</topology>
        <orientation evidence="1">Cytoplasmic side</orientation>
    </subcellularLocation>
</comment>
<comment type="similarity">
    <text evidence="1">Belongs to the UPF0161 family.</text>
</comment>
<accession>B1YQJ8</accession>
<protein>
    <recommendedName>
        <fullName evidence="1">Putative membrane protein insertion efficiency factor</fullName>
    </recommendedName>
</protein>